<keyword id="KW-0963">Cytoplasm</keyword>
<keyword id="KW-0275">Fatty acid biosynthesis</keyword>
<keyword id="KW-0276">Fatty acid metabolism</keyword>
<keyword id="KW-0444">Lipid biosynthesis</keyword>
<keyword id="KW-0443">Lipid metabolism</keyword>
<keyword id="KW-0596">Phosphopantetheine</keyword>
<keyword id="KW-0597">Phosphoprotein</keyword>
<keyword id="KW-1185">Reference proteome</keyword>
<organism>
    <name type="scientific">Psychromonas ingrahamii (strain DSM 17664 / CCUG 51855 / 37)</name>
    <dbReference type="NCBI Taxonomy" id="357804"/>
    <lineage>
        <taxon>Bacteria</taxon>
        <taxon>Pseudomonadati</taxon>
        <taxon>Pseudomonadota</taxon>
        <taxon>Gammaproteobacteria</taxon>
        <taxon>Alteromonadales</taxon>
        <taxon>Psychromonadaceae</taxon>
        <taxon>Psychromonas</taxon>
    </lineage>
</organism>
<comment type="function">
    <text evidence="1">Carrier of the growing fatty acid chain in fatty acid biosynthesis.</text>
</comment>
<comment type="pathway">
    <text evidence="1">Lipid metabolism; fatty acid biosynthesis.</text>
</comment>
<comment type="subcellular location">
    <subcellularLocation>
        <location evidence="1">Cytoplasm</location>
    </subcellularLocation>
</comment>
<comment type="PTM">
    <text evidence="1">4'-phosphopantetheine is transferred from CoA to a specific serine of apo-ACP by AcpS. This modification is essential for activity because fatty acids are bound in thioester linkage to the sulfhydryl of the prosthetic group.</text>
</comment>
<comment type="similarity">
    <text evidence="1">Belongs to the acyl carrier protein (ACP) family.</text>
</comment>
<protein>
    <recommendedName>
        <fullName evidence="1">Acyl carrier protein</fullName>
        <shortName evidence="1">ACP</shortName>
    </recommendedName>
</protein>
<reference key="1">
    <citation type="journal article" date="2008" name="BMC Genomics">
        <title>Genomics of an extreme psychrophile, Psychromonas ingrahamii.</title>
        <authorList>
            <person name="Riley M."/>
            <person name="Staley J.T."/>
            <person name="Danchin A."/>
            <person name="Wang T.Z."/>
            <person name="Brettin T.S."/>
            <person name="Hauser L.J."/>
            <person name="Land M.L."/>
            <person name="Thompson L.S."/>
        </authorList>
    </citation>
    <scope>NUCLEOTIDE SEQUENCE [LARGE SCALE GENOMIC DNA]</scope>
    <source>
        <strain>DSM 17664 / CCUG 51855 / 37</strain>
    </source>
</reference>
<proteinExistence type="inferred from homology"/>
<dbReference type="EMBL" id="CP000510">
    <property type="protein sequence ID" value="ABM02929.1"/>
    <property type="molecule type" value="Genomic_DNA"/>
</dbReference>
<dbReference type="RefSeq" id="WP_011769492.1">
    <property type="nucleotide sequence ID" value="NC_008709.1"/>
</dbReference>
<dbReference type="SMR" id="A1STW4"/>
<dbReference type="STRING" id="357804.Ping_1090"/>
<dbReference type="KEGG" id="pin:Ping_1090"/>
<dbReference type="eggNOG" id="COG0236">
    <property type="taxonomic scope" value="Bacteria"/>
</dbReference>
<dbReference type="HOGENOM" id="CLU_108696_5_1_6"/>
<dbReference type="OrthoDB" id="9804551at2"/>
<dbReference type="UniPathway" id="UPA00094"/>
<dbReference type="Proteomes" id="UP000000639">
    <property type="component" value="Chromosome"/>
</dbReference>
<dbReference type="GO" id="GO:0005829">
    <property type="term" value="C:cytosol"/>
    <property type="evidence" value="ECO:0007669"/>
    <property type="project" value="TreeGrafter"/>
</dbReference>
<dbReference type="GO" id="GO:0016020">
    <property type="term" value="C:membrane"/>
    <property type="evidence" value="ECO:0007669"/>
    <property type="project" value="GOC"/>
</dbReference>
<dbReference type="GO" id="GO:0000035">
    <property type="term" value="F:acyl binding"/>
    <property type="evidence" value="ECO:0007669"/>
    <property type="project" value="TreeGrafter"/>
</dbReference>
<dbReference type="GO" id="GO:0000036">
    <property type="term" value="F:acyl carrier activity"/>
    <property type="evidence" value="ECO:0007669"/>
    <property type="project" value="UniProtKB-UniRule"/>
</dbReference>
<dbReference type="GO" id="GO:0009245">
    <property type="term" value="P:lipid A biosynthetic process"/>
    <property type="evidence" value="ECO:0007669"/>
    <property type="project" value="TreeGrafter"/>
</dbReference>
<dbReference type="FunFam" id="1.10.1200.10:FF:000001">
    <property type="entry name" value="Acyl carrier protein"/>
    <property type="match status" value="1"/>
</dbReference>
<dbReference type="Gene3D" id="1.10.1200.10">
    <property type="entry name" value="ACP-like"/>
    <property type="match status" value="1"/>
</dbReference>
<dbReference type="HAMAP" id="MF_01217">
    <property type="entry name" value="Acyl_carrier"/>
    <property type="match status" value="1"/>
</dbReference>
<dbReference type="InterPro" id="IPR003231">
    <property type="entry name" value="ACP"/>
</dbReference>
<dbReference type="InterPro" id="IPR036736">
    <property type="entry name" value="ACP-like_sf"/>
</dbReference>
<dbReference type="InterPro" id="IPR009081">
    <property type="entry name" value="PP-bd_ACP"/>
</dbReference>
<dbReference type="InterPro" id="IPR006162">
    <property type="entry name" value="Ppantetheine_attach_site"/>
</dbReference>
<dbReference type="NCBIfam" id="TIGR00517">
    <property type="entry name" value="acyl_carrier"/>
    <property type="match status" value="1"/>
</dbReference>
<dbReference type="NCBIfam" id="NF002148">
    <property type="entry name" value="PRK00982.1-2"/>
    <property type="match status" value="1"/>
</dbReference>
<dbReference type="NCBIfam" id="NF002149">
    <property type="entry name" value="PRK00982.1-3"/>
    <property type="match status" value="1"/>
</dbReference>
<dbReference type="NCBIfam" id="NF002150">
    <property type="entry name" value="PRK00982.1-4"/>
    <property type="match status" value="1"/>
</dbReference>
<dbReference type="NCBIfam" id="NF002151">
    <property type="entry name" value="PRK00982.1-5"/>
    <property type="match status" value="1"/>
</dbReference>
<dbReference type="PANTHER" id="PTHR20863">
    <property type="entry name" value="ACYL CARRIER PROTEIN"/>
    <property type="match status" value="1"/>
</dbReference>
<dbReference type="PANTHER" id="PTHR20863:SF76">
    <property type="entry name" value="CARRIER DOMAIN-CONTAINING PROTEIN"/>
    <property type="match status" value="1"/>
</dbReference>
<dbReference type="Pfam" id="PF00550">
    <property type="entry name" value="PP-binding"/>
    <property type="match status" value="1"/>
</dbReference>
<dbReference type="SUPFAM" id="SSF47336">
    <property type="entry name" value="ACP-like"/>
    <property type="match status" value="1"/>
</dbReference>
<dbReference type="PROSITE" id="PS50075">
    <property type="entry name" value="CARRIER"/>
    <property type="match status" value="1"/>
</dbReference>
<dbReference type="PROSITE" id="PS00012">
    <property type="entry name" value="PHOSPHOPANTETHEINE"/>
    <property type="match status" value="1"/>
</dbReference>
<sequence length="77" mass="8600">MSNIEERVRNIIVEQLGVQLEEVKNEASFVDDLGADSLDTVELVMALEEEFDTEIPDEEAEKITTVQSAIDYVVNNG</sequence>
<evidence type="ECO:0000255" key="1">
    <source>
        <dbReference type="HAMAP-Rule" id="MF_01217"/>
    </source>
</evidence>
<evidence type="ECO:0000255" key="2">
    <source>
        <dbReference type="PROSITE-ProRule" id="PRU00258"/>
    </source>
</evidence>
<accession>A1STW4</accession>
<feature type="chain" id="PRO_1000066665" description="Acyl carrier protein">
    <location>
        <begin position="1"/>
        <end position="77"/>
    </location>
</feature>
<feature type="domain" description="Carrier" evidence="2">
    <location>
        <begin position="2"/>
        <end position="77"/>
    </location>
</feature>
<feature type="modified residue" description="O-(pantetheine 4'-phosphoryl)serine" evidence="2">
    <location>
        <position position="37"/>
    </location>
</feature>
<gene>
    <name evidence="1" type="primary">acpP</name>
    <name type="ordered locus">Ping_1090</name>
</gene>
<name>ACP_PSYIN</name>